<proteinExistence type="inferred from homology"/>
<comment type="function">
    <text evidence="1">Antitoxin component of a type II toxin-antitoxin (TA) system. Labile antitoxin that binds to cognate MazF toxin and counteracts its endoribonuclease activity.</text>
</comment>
<comment type="subunit">
    <text evidence="1">Forms a complex with cognate toxin MazF which inhibits the endoribonuclease activity of MazF.</text>
</comment>
<comment type="similarity">
    <text evidence="2">Belongs to the MazE/EndoAI family.</text>
</comment>
<keyword id="KW-1185">Reference proteome</keyword>
<keyword id="KW-1277">Toxin-antitoxin system</keyword>
<dbReference type="EMBL" id="CP000253">
    <property type="protein sequence ID" value="ABD31338.1"/>
    <property type="molecule type" value="Genomic_DNA"/>
</dbReference>
<dbReference type="EMBL" id="Y16431">
    <property type="protein sequence ID" value="CAA76222.1"/>
    <property type="molecule type" value="Genomic_DNA"/>
</dbReference>
<dbReference type="RefSeq" id="WP_000948331.1">
    <property type="nucleotide sequence ID" value="NZ_LS483365.1"/>
</dbReference>
<dbReference type="RefSeq" id="YP_500783.1">
    <property type="nucleotide sequence ID" value="NC_007795.1"/>
</dbReference>
<dbReference type="SMR" id="Q2FWI7"/>
<dbReference type="STRING" id="93061.SAOUHSC_02304"/>
<dbReference type="PaxDb" id="1280-SAXN108_2314"/>
<dbReference type="GeneID" id="3919175"/>
<dbReference type="GeneID" id="98346377"/>
<dbReference type="KEGG" id="sao:SAOUHSC_02304"/>
<dbReference type="PATRIC" id="fig|93061.5.peg.2088"/>
<dbReference type="eggNOG" id="ENOG50305BV">
    <property type="taxonomic scope" value="Bacteria"/>
</dbReference>
<dbReference type="HOGENOM" id="CLU_3012108_0_0_9"/>
<dbReference type="OrthoDB" id="2418545at2"/>
<dbReference type="PRO" id="PR:Q2FWI7"/>
<dbReference type="Proteomes" id="UP000008816">
    <property type="component" value="Chromosome"/>
</dbReference>
<dbReference type="GO" id="GO:0006355">
    <property type="term" value="P:regulation of DNA-templated transcription"/>
    <property type="evidence" value="ECO:0007669"/>
    <property type="project" value="InterPro"/>
</dbReference>
<dbReference type="Gene3D" id="1.10.1220.10">
    <property type="entry name" value="Met repressor-like"/>
    <property type="match status" value="1"/>
</dbReference>
<dbReference type="InterPro" id="IPR013321">
    <property type="entry name" value="Arc_rbn_hlx_hlx"/>
</dbReference>
<dbReference type="InterPro" id="IPR048242">
    <property type="entry name" value="MazE"/>
</dbReference>
<dbReference type="NCBIfam" id="NF041459">
    <property type="entry name" value="antitoxMazE_Staph"/>
    <property type="match status" value="1"/>
</dbReference>
<reference key="1">
    <citation type="book" date="2006" name="Gram positive pathogens, 2nd edition">
        <title>The Staphylococcus aureus NCTC 8325 genome.</title>
        <editorList>
            <person name="Fischetti V."/>
            <person name="Novick R."/>
            <person name="Ferretti J."/>
            <person name="Portnoy D."/>
            <person name="Rood J."/>
        </editorList>
        <authorList>
            <person name="Gillaspy A.F."/>
            <person name="Worrell V."/>
            <person name="Orvis J."/>
            <person name="Roe B.A."/>
            <person name="Dyer D.W."/>
            <person name="Iandolo J.J."/>
        </authorList>
    </citation>
    <scope>NUCLEOTIDE SEQUENCE [LARGE SCALE GENOMIC DNA]</scope>
    <source>
        <strain>NCTC 8325 / PS 47</strain>
    </source>
</reference>
<reference key="2">
    <citation type="journal article" date="1998" name="Gene">
        <title>Sequence of the putative alanine racemase operon in Staphylococcus aureus: insertional interruption of this operon reduces D-alanine substitution of lipoteichoic acid and autolysis.</title>
        <authorList>
            <person name="Kullik I."/>
            <person name="Jenni R."/>
            <person name="Berger-Baechi B."/>
        </authorList>
    </citation>
    <scope>NUCLEOTIDE SEQUENCE [GENOMIC DNA] OF 1-34</scope>
</reference>
<feature type="chain" id="PRO_0000330718" description="Antitoxin MazE">
    <location>
        <begin position="1"/>
        <end position="56"/>
    </location>
</feature>
<accession>Q2FWI7</accession>
<accession>Q9ZAH4</accession>
<name>MAZE_STAA8</name>
<gene>
    <name type="primary">mazE</name>
    <name type="ordered locus">SAOUHSC_02304</name>
</gene>
<protein>
    <recommendedName>
        <fullName>Antitoxin MazE</fullName>
    </recommendedName>
</protein>
<evidence type="ECO:0000250" key="1">
    <source>
        <dbReference type="UniProtKB" id="P0C7B4"/>
    </source>
</evidence>
<evidence type="ECO:0000305" key="2"/>
<organism>
    <name type="scientific">Staphylococcus aureus (strain NCTC 8325 / PS 47)</name>
    <dbReference type="NCBI Taxonomy" id="93061"/>
    <lineage>
        <taxon>Bacteria</taxon>
        <taxon>Bacillati</taxon>
        <taxon>Bacillota</taxon>
        <taxon>Bacilli</taxon>
        <taxon>Bacillales</taxon>
        <taxon>Staphylococcaceae</taxon>
        <taxon>Staphylococcus</taxon>
    </lineage>
</organism>
<sequence length="56" mass="6252">MLSFSQNRSHSLEQSLKEGYSQMADLNLSLANEAFPIECEACDCNETYLSSNSTNE</sequence>